<evidence type="ECO:0000250" key="1"/>
<evidence type="ECO:0000255" key="2"/>
<evidence type="ECO:0000256" key="3">
    <source>
        <dbReference type="SAM" id="MobiDB-lite"/>
    </source>
</evidence>
<evidence type="ECO:0000305" key="4"/>
<name>RT10_EMENI</name>
<accession>Q5AYZ1</accession>
<accession>C8V0B2</accession>
<comment type="function">
    <text evidence="1">Involved in mitochondrial genome encoded proteins translation. Involved in the binding of tRNA to the ribosomes (By similarity).</text>
</comment>
<comment type="subunit">
    <text evidence="1">Part of the mitochondrial small ribosomal subunit.</text>
</comment>
<comment type="subcellular location">
    <subcellularLocation>
        <location evidence="1">Mitochondrion</location>
    </subcellularLocation>
</comment>
<comment type="similarity">
    <text evidence="4">Belongs to the universal ribosomal protein uS10 family.</text>
</comment>
<comment type="sequence caution" evidence="4">
    <conflict type="erroneous gene model prediction">
        <sequence resource="EMBL-CDS" id="EAA57829"/>
    </conflict>
</comment>
<organism>
    <name type="scientific">Emericella nidulans (strain FGSC A4 / ATCC 38163 / CBS 112.46 / NRRL 194 / M139)</name>
    <name type="common">Aspergillus nidulans</name>
    <dbReference type="NCBI Taxonomy" id="227321"/>
    <lineage>
        <taxon>Eukaryota</taxon>
        <taxon>Fungi</taxon>
        <taxon>Dikarya</taxon>
        <taxon>Ascomycota</taxon>
        <taxon>Pezizomycotina</taxon>
        <taxon>Eurotiomycetes</taxon>
        <taxon>Eurotiomycetidae</taxon>
        <taxon>Eurotiales</taxon>
        <taxon>Aspergillaceae</taxon>
        <taxon>Aspergillus</taxon>
        <taxon>Aspergillus subgen. Nidulantes</taxon>
    </lineage>
</organism>
<reference key="1">
    <citation type="journal article" date="2005" name="Nature">
        <title>Sequencing of Aspergillus nidulans and comparative analysis with A. fumigatus and A. oryzae.</title>
        <authorList>
            <person name="Galagan J.E."/>
            <person name="Calvo S.E."/>
            <person name="Cuomo C."/>
            <person name="Ma L.-J."/>
            <person name="Wortman J.R."/>
            <person name="Batzoglou S."/>
            <person name="Lee S.-I."/>
            <person name="Bastuerkmen M."/>
            <person name="Spevak C.C."/>
            <person name="Clutterbuck J."/>
            <person name="Kapitonov V."/>
            <person name="Jurka J."/>
            <person name="Scazzocchio C."/>
            <person name="Farman M.L."/>
            <person name="Butler J."/>
            <person name="Purcell S."/>
            <person name="Harris S."/>
            <person name="Braus G.H."/>
            <person name="Draht O."/>
            <person name="Busch S."/>
            <person name="D'Enfert C."/>
            <person name="Bouchier C."/>
            <person name="Goldman G.H."/>
            <person name="Bell-Pedersen D."/>
            <person name="Griffiths-Jones S."/>
            <person name="Doonan J.H."/>
            <person name="Yu J."/>
            <person name="Vienken K."/>
            <person name="Pain A."/>
            <person name="Freitag M."/>
            <person name="Selker E.U."/>
            <person name="Archer D.B."/>
            <person name="Penalva M.A."/>
            <person name="Oakley B.R."/>
            <person name="Momany M."/>
            <person name="Tanaka T."/>
            <person name="Kumagai T."/>
            <person name="Asai K."/>
            <person name="Machida M."/>
            <person name="Nierman W.C."/>
            <person name="Denning D.W."/>
            <person name="Caddick M.X."/>
            <person name="Hynes M."/>
            <person name="Paoletti M."/>
            <person name="Fischer R."/>
            <person name="Miller B.L."/>
            <person name="Dyer P.S."/>
            <person name="Sachs M.S."/>
            <person name="Osmani S.A."/>
            <person name="Birren B.W."/>
        </authorList>
    </citation>
    <scope>NUCLEOTIDE SEQUENCE [LARGE SCALE GENOMIC DNA]</scope>
    <source>
        <strain>FGSC A4 / ATCC 38163 / CBS 112.46 / NRRL 194 / M139</strain>
    </source>
</reference>
<reference key="2">
    <citation type="journal article" date="2009" name="Fungal Genet. Biol.">
        <title>The 2008 update of the Aspergillus nidulans genome annotation: a community effort.</title>
        <authorList>
            <person name="Wortman J.R."/>
            <person name="Gilsenan J.M."/>
            <person name="Joardar V."/>
            <person name="Deegan J."/>
            <person name="Clutterbuck J."/>
            <person name="Andersen M.R."/>
            <person name="Archer D."/>
            <person name="Bencina M."/>
            <person name="Braus G."/>
            <person name="Coutinho P."/>
            <person name="von Dohren H."/>
            <person name="Doonan J."/>
            <person name="Driessen A.J."/>
            <person name="Durek P."/>
            <person name="Espeso E."/>
            <person name="Fekete E."/>
            <person name="Flipphi M."/>
            <person name="Estrada C.G."/>
            <person name="Geysens S."/>
            <person name="Goldman G."/>
            <person name="de Groot P.W."/>
            <person name="Hansen K."/>
            <person name="Harris S.D."/>
            <person name="Heinekamp T."/>
            <person name="Helmstaedt K."/>
            <person name="Henrissat B."/>
            <person name="Hofmann G."/>
            <person name="Homan T."/>
            <person name="Horio T."/>
            <person name="Horiuchi H."/>
            <person name="James S."/>
            <person name="Jones M."/>
            <person name="Karaffa L."/>
            <person name="Karanyi Z."/>
            <person name="Kato M."/>
            <person name="Keller N."/>
            <person name="Kelly D.E."/>
            <person name="Kiel J.A."/>
            <person name="Kim J.M."/>
            <person name="van der Klei I.J."/>
            <person name="Klis F.M."/>
            <person name="Kovalchuk A."/>
            <person name="Krasevec N."/>
            <person name="Kubicek C.P."/>
            <person name="Liu B."/>
            <person name="Maccabe A."/>
            <person name="Meyer V."/>
            <person name="Mirabito P."/>
            <person name="Miskei M."/>
            <person name="Mos M."/>
            <person name="Mullins J."/>
            <person name="Nelson D.R."/>
            <person name="Nielsen J."/>
            <person name="Oakley B.R."/>
            <person name="Osmani S.A."/>
            <person name="Pakula T."/>
            <person name="Paszewski A."/>
            <person name="Paulsen I."/>
            <person name="Pilsyk S."/>
            <person name="Pocsi I."/>
            <person name="Punt P.J."/>
            <person name="Ram A.F."/>
            <person name="Ren Q."/>
            <person name="Robellet X."/>
            <person name="Robson G."/>
            <person name="Seiboth B."/>
            <person name="van Solingen P."/>
            <person name="Specht T."/>
            <person name="Sun J."/>
            <person name="Taheri-Talesh N."/>
            <person name="Takeshita N."/>
            <person name="Ussery D."/>
            <person name="vanKuyk P.A."/>
            <person name="Visser H."/>
            <person name="van de Vondervoort P.J."/>
            <person name="de Vries R.P."/>
            <person name="Walton J."/>
            <person name="Xiang X."/>
            <person name="Xiong Y."/>
            <person name="Zeng A.P."/>
            <person name="Brandt B.W."/>
            <person name="Cornell M.J."/>
            <person name="van den Hondel C.A."/>
            <person name="Visser J."/>
            <person name="Oliver S.G."/>
            <person name="Turner G."/>
        </authorList>
    </citation>
    <scope>GENOME REANNOTATION</scope>
    <source>
        <strain>FGSC A4 / ATCC 38163 / CBS 112.46 / NRRL 194 / M139</strain>
    </source>
</reference>
<proteinExistence type="inferred from homology"/>
<feature type="transit peptide" description="Mitochondrion" evidence="2">
    <location>
        <begin position="1"/>
        <end position="33"/>
    </location>
</feature>
<feature type="chain" id="PRO_0000043262" description="Small ribosomal subunit protein uS10m">
    <location>
        <begin position="34"/>
        <end position="287"/>
    </location>
</feature>
<feature type="region of interest" description="Disordered" evidence="3">
    <location>
        <begin position="33"/>
        <end position="84"/>
    </location>
</feature>
<feature type="compositionally biased region" description="Polar residues" evidence="3">
    <location>
        <begin position="33"/>
        <end position="43"/>
    </location>
</feature>
<feature type="compositionally biased region" description="Basic and acidic residues" evidence="3">
    <location>
        <begin position="63"/>
        <end position="73"/>
    </location>
</feature>
<feature type="compositionally biased region" description="Polar residues" evidence="3">
    <location>
        <begin position="74"/>
        <end position="84"/>
    </location>
</feature>
<dbReference type="EMBL" id="AACD01000109">
    <property type="protein sequence ID" value="EAA57829.1"/>
    <property type="status" value="ALT_SEQ"/>
    <property type="molecule type" value="Genomic_DNA"/>
</dbReference>
<dbReference type="EMBL" id="BN001301">
    <property type="protein sequence ID" value="CBF70837.1"/>
    <property type="molecule type" value="Genomic_DNA"/>
</dbReference>
<dbReference type="RefSeq" id="XP_664093.1">
    <property type="nucleotide sequence ID" value="XM_659001.1"/>
</dbReference>
<dbReference type="SMR" id="Q5AYZ1"/>
<dbReference type="FunCoup" id="Q5AYZ1">
    <property type="interactions" value="242"/>
</dbReference>
<dbReference type="STRING" id="227321.Q5AYZ1"/>
<dbReference type="EnsemblFungi" id="CBF70837">
    <property type="protein sequence ID" value="CBF70837"/>
    <property type="gene ID" value="ANIA_06489"/>
</dbReference>
<dbReference type="VEuPathDB" id="FungiDB:AN6489"/>
<dbReference type="eggNOG" id="KOG3321">
    <property type="taxonomic scope" value="Eukaryota"/>
</dbReference>
<dbReference type="HOGENOM" id="CLU_051208_2_0_1"/>
<dbReference type="InParanoid" id="Q5AYZ1"/>
<dbReference type="OMA" id="PQEWNDR"/>
<dbReference type="OrthoDB" id="366214at2759"/>
<dbReference type="Proteomes" id="UP000000560">
    <property type="component" value="Chromosome I"/>
</dbReference>
<dbReference type="GO" id="GO:0005739">
    <property type="term" value="C:mitochondrion"/>
    <property type="evidence" value="ECO:0000318"/>
    <property type="project" value="GO_Central"/>
</dbReference>
<dbReference type="GO" id="GO:0015935">
    <property type="term" value="C:small ribosomal subunit"/>
    <property type="evidence" value="ECO:0000318"/>
    <property type="project" value="GO_Central"/>
</dbReference>
<dbReference type="GO" id="GO:0003735">
    <property type="term" value="F:structural constituent of ribosome"/>
    <property type="evidence" value="ECO:0000318"/>
    <property type="project" value="GO_Central"/>
</dbReference>
<dbReference type="GO" id="GO:0006412">
    <property type="term" value="P:translation"/>
    <property type="evidence" value="ECO:0007669"/>
    <property type="project" value="InterPro"/>
</dbReference>
<dbReference type="FunFam" id="3.30.70.600:FF:000003">
    <property type="entry name" value="30S ribosomal protein S10"/>
    <property type="match status" value="1"/>
</dbReference>
<dbReference type="Gene3D" id="3.30.70.600">
    <property type="entry name" value="Ribosomal protein S10 domain"/>
    <property type="match status" value="1"/>
</dbReference>
<dbReference type="HAMAP" id="MF_00508">
    <property type="entry name" value="Ribosomal_uS10"/>
    <property type="match status" value="1"/>
</dbReference>
<dbReference type="InterPro" id="IPR001848">
    <property type="entry name" value="Ribosomal_uS10"/>
</dbReference>
<dbReference type="InterPro" id="IPR027486">
    <property type="entry name" value="Ribosomal_uS10_dom"/>
</dbReference>
<dbReference type="InterPro" id="IPR036838">
    <property type="entry name" value="Ribosomal_uS10_dom_sf"/>
</dbReference>
<dbReference type="PANTHER" id="PTHR11700">
    <property type="entry name" value="30S RIBOSOMAL PROTEIN S10 FAMILY MEMBER"/>
    <property type="match status" value="1"/>
</dbReference>
<dbReference type="Pfam" id="PF00338">
    <property type="entry name" value="Ribosomal_S10"/>
    <property type="match status" value="1"/>
</dbReference>
<dbReference type="SMART" id="SM01403">
    <property type="entry name" value="Ribosomal_S10"/>
    <property type="match status" value="1"/>
</dbReference>
<dbReference type="SUPFAM" id="SSF54999">
    <property type="entry name" value="Ribosomal protein S10"/>
    <property type="match status" value="1"/>
</dbReference>
<sequence>MSLFSPHRILLRTGSAFQLATATRALLSTSSQLRNTKNAQSGLAEQARAEEPVASSPSQTTRPEQKSLEEETTKQTQTHADSTVNEWGARLTDLNINARLPRSVQALYLRPLRRKAEYGLPVCDLQLRSYSVRNLEFFADFAIRAAYYLNLPVSGPVPLPKIVERWTFPRSSFVHKKSQENFERITVRRLIQIKDGNSQAVQAWLAFLRKHAFYGVGMKANIWEHESIEIAKTMDQTLPEIEKALEPHISQFGRREDAEPAHDLITNFLGSERLSLSKGPLTDVRGG</sequence>
<keyword id="KW-0496">Mitochondrion</keyword>
<keyword id="KW-1185">Reference proteome</keyword>
<keyword id="KW-0687">Ribonucleoprotein</keyword>
<keyword id="KW-0689">Ribosomal protein</keyword>
<keyword id="KW-0809">Transit peptide</keyword>
<protein>
    <recommendedName>
        <fullName evidence="4">Small ribosomal subunit protein uS10m</fullName>
    </recommendedName>
    <alternativeName>
        <fullName>37S ribosomal protein S10, mitochondrial</fullName>
    </alternativeName>
    <alternativeName>
        <fullName>Mitochondrial ribosomal small subunit protein 10</fullName>
    </alternativeName>
</protein>
<gene>
    <name type="primary">rsm10</name>
    <name type="ORF">AN6489</name>
</gene>